<gene>
    <name evidence="1" type="primary">rlmH</name>
    <name type="ordered locus">CHAB381_0536</name>
</gene>
<evidence type="ECO:0000255" key="1">
    <source>
        <dbReference type="HAMAP-Rule" id="MF_00658"/>
    </source>
</evidence>
<sequence length="151" mass="17271">MSEIFVNSIQKNKNDFAMQIAEYIKMSQKFAALKDNVFFNQKIAKAQSIGKDEALKSYDEVYFAHKKGYLIALDERGEMIDSLQFAEILSKNSQISFFIGGAYGLSENFKQKMDKIISLTKLTLAHKIAKLMLFEQIFRGLCINAGHPYHK</sequence>
<reference key="1">
    <citation type="submission" date="2007-07" db="EMBL/GenBank/DDBJ databases">
        <title>Complete genome sequence of Campylobacter hominis ATCC BAA-381, a commensal isolated from the human gastrointestinal tract.</title>
        <authorList>
            <person name="Fouts D.E."/>
            <person name="Mongodin E.F."/>
            <person name="Puiu D."/>
            <person name="Sebastian Y."/>
            <person name="Miller W.G."/>
            <person name="Mandrell R.E."/>
            <person name="Nelson K.E."/>
        </authorList>
    </citation>
    <scope>NUCLEOTIDE SEQUENCE [LARGE SCALE GENOMIC DNA]</scope>
    <source>
        <strain>ATCC BAA-381 / DSM 21671 / CCUG 45161 / LMG 19568 / NCTC 13146 / CH001A</strain>
    </source>
</reference>
<name>RLMH_CAMHC</name>
<protein>
    <recommendedName>
        <fullName evidence="1">Ribosomal RNA large subunit methyltransferase H</fullName>
        <ecNumber evidence="1">2.1.1.177</ecNumber>
    </recommendedName>
    <alternativeName>
        <fullName evidence="1">23S rRNA (pseudouridine1915-N3)-methyltransferase</fullName>
    </alternativeName>
    <alternativeName>
        <fullName evidence="1">23S rRNA m3Psi1915 methyltransferase</fullName>
    </alternativeName>
    <alternativeName>
        <fullName evidence="1">rRNA (pseudouridine-N3-)-methyltransferase RlmH</fullName>
    </alternativeName>
</protein>
<comment type="function">
    <text evidence="1">Specifically methylates the pseudouridine at position 1915 (m3Psi1915) in 23S rRNA.</text>
</comment>
<comment type="catalytic activity">
    <reaction evidence="1">
        <text>pseudouridine(1915) in 23S rRNA + S-adenosyl-L-methionine = N(3)-methylpseudouridine(1915) in 23S rRNA + S-adenosyl-L-homocysteine + H(+)</text>
        <dbReference type="Rhea" id="RHEA:42752"/>
        <dbReference type="Rhea" id="RHEA-COMP:10221"/>
        <dbReference type="Rhea" id="RHEA-COMP:10222"/>
        <dbReference type="ChEBI" id="CHEBI:15378"/>
        <dbReference type="ChEBI" id="CHEBI:57856"/>
        <dbReference type="ChEBI" id="CHEBI:59789"/>
        <dbReference type="ChEBI" id="CHEBI:65314"/>
        <dbReference type="ChEBI" id="CHEBI:74486"/>
        <dbReference type="EC" id="2.1.1.177"/>
    </reaction>
</comment>
<comment type="subunit">
    <text evidence="1">Homodimer.</text>
</comment>
<comment type="subcellular location">
    <subcellularLocation>
        <location evidence="1">Cytoplasm</location>
    </subcellularLocation>
</comment>
<comment type="similarity">
    <text evidence="1">Belongs to the RNA methyltransferase RlmH family.</text>
</comment>
<keyword id="KW-0963">Cytoplasm</keyword>
<keyword id="KW-0489">Methyltransferase</keyword>
<keyword id="KW-1185">Reference proteome</keyword>
<keyword id="KW-0698">rRNA processing</keyword>
<keyword id="KW-0949">S-adenosyl-L-methionine</keyword>
<keyword id="KW-0808">Transferase</keyword>
<feature type="chain" id="PRO_0000366576" description="Ribosomal RNA large subunit methyltransferase H">
    <location>
        <begin position="1"/>
        <end position="151"/>
    </location>
</feature>
<feature type="binding site" evidence="1">
    <location>
        <position position="73"/>
    </location>
    <ligand>
        <name>S-adenosyl-L-methionine</name>
        <dbReference type="ChEBI" id="CHEBI:59789"/>
    </ligand>
</feature>
<feature type="binding site" evidence="1">
    <location>
        <position position="100"/>
    </location>
    <ligand>
        <name>S-adenosyl-L-methionine</name>
        <dbReference type="ChEBI" id="CHEBI:59789"/>
    </ligand>
</feature>
<feature type="binding site" evidence="1">
    <location>
        <begin position="119"/>
        <end position="124"/>
    </location>
    <ligand>
        <name>S-adenosyl-L-methionine</name>
        <dbReference type="ChEBI" id="CHEBI:59789"/>
    </ligand>
</feature>
<dbReference type="EC" id="2.1.1.177" evidence="1"/>
<dbReference type="EMBL" id="CP000776">
    <property type="protein sequence ID" value="ABS50935.1"/>
    <property type="molecule type" value="Genomic_DNA"/>
</dbReference>
<dbReference type="RefSeq" id="WP_012108411.1">
    <property type="nucleotide sequence ID" value="NC_009714.1"/>
</dbReference>
<dbReference type="SMR" id="A7I0T3"/>
<dbReference type="STRING" id="360107.CHAB381_0536"/>
<dbReference type="KEGG" id="cha:CHAB381_0536"/>
<dbReference type="eggNOG" id="COG1576">
    <property type="taxonomic scope" value="Bacteria"/>
</dbReference>
<dbReference type="HOGENOM" id="CLU_100552_2_1_7"/>
<dbReference type="OrthoDB" id="9806643at2"/>
<dbReference type="Proteomes" id="UP000002407">
    <property type="component" value="Chromosome"/>
</dbReference>
<dbReference type="GO" id="GO:0005737">
    <property type="term" value="C:cytoplasm"/>
    <property type="evidence" value="ECO:0007669"/>
    <property type="project" value="UniProtKB-SubCell"/>
</dbReference>
<dbReference type="GO" id="GO:0070038">
    <property type="term" value="F:rRNA (pseudouridine-N3-)-methyltransferase activity"/>
    <property type="evidence" value="ECO:0007669"/>
    <property type="project" value="UniProtKB-UniRule"/>
</dbReference>
<dbReference type="CDD" id="cd18081">
    <property type="entry name" value="RlmH-like"/>
    <property type="match status" value="1"/>
</dbReference>
<dbReference type="Gene3D" id="3.40.1280.10">
    <property type="match status" value="1"/>
</dbReference>
<dbReference type="HAMAP" id="MF_00658">
    <property type="entry name" value="23SrRNA_methyltr_H"/>
    <property type="match status" value="1"/>
</dbReference>
<dbReference type="InterPro" id="IPR029028">
    <property type="entry name" value="Alpha/beta_knot_MTases"/>
</dbReference>
<dbReference type="InterPro" id="IPR003742">
    <property type="entry name" value="RlmH-like"/>
</dbReference>
<dbReference type="InterPro" id="IPR029026">
    <property type="entry name" value="tRNA_m1G_MTases_N"/>
</dbReference>
<dbReference type="PANTHER" id="PTHR33603">
    <property type="entry name" value="METHYLTRANSFERASE"/>
    <property type="match status" value="1"/>
</dbReference>
<dbReference type="PANTHER" id="PTHR33603:SF1">
    <property type="entry name" value="RIBOSOMAL RNA LARGE SUBUNIT METHYLTRANSFERASE H"/>
    <property type="match status" value="1"/>
</dbReference>
<dbReference type="Pfam" id="PF02590">
    <property type="entry name" value="SPOUT_MTase"/>
    <property type="match status" value="1"/>
</dbReference>
<dbReference type="PIRSF" id="PIRSF004505">
    <property type="entry name" value="MT_bac"/>
    <property type="match status" value="1"/>
</dbReference>
<dbReference type="SUPFAM" id="SSF75217">
    <property type="entry name" value="alpha/beta knot"/>
    <property type="match status" value="1"/>
</dbReference>
<accession>A7I0T3</accession>
<organism>
    <name type="scientific">Campylobacter hominis (strain ATCC BAA-381 / DSM 21671 / CCUG 45161 / LMG 19568 / NCTC 13146 / CH001A)</name>
    <dbReference type="NCBI Taxonomy" id="360107"/>
    <lineage>
        <taxon>Bacteria</taxon>
        <taxon>Pseudomonadati</taxon>
        <taxon>Campylobacterota</taxon>
        <taxon>Epsilonproteobacteria</taxon>
        <taxon>Campylobacterales</taxon>
        <taxon>Campylobacteraceae</taxon>
        <taxon>Campylobacter</taxon>
    </lineage>
</organism>
<proteinExistence type="inferred from homology"/>